<name>RL15_LARHH</name>
<evidence type="ECO:0000255" key="1">
    <source>
        <dbReference type="HAMAP-Rule" id="MF_01341"/>
    </source>
</evidence>
<evidence type="ECO:0000256" key="2">
    <source>
        <dbReference type="SAM" id="MobiDB-lite"/>
    </source>
</evidence>
<evidence type="ECO:0000305" key="3"/>
<accession>C1DAT6</accession>
<comment type="function">
    <text evidence="1">Binds to the 23S rRNA.</text>
</comment>
<comment type="subunit">
    <text evidence="1">Part of the 50S ribosomal subunit.</text>
</comment>
<comment type="similarity">
    <text evidence="1">Belongs to the universal ribosomal protein uL15 family.</text>
</comment>
<dbReference type="EMBL" id="CP001154">
    <property type="protein sequence ID" value="ACO73267.1"/>
    <property type="molecule type" value="Genomic_DNA"/>
</dbReference>
<dbReference type="RefSeq" id="WP_012695761.1">
    <property type="nucleotide sequence ID" value="NC_012559.1"/>
</dbReference>
<dbReference type="SMR" id="C1DAT6"/>
<dbReference type="STRING" id="557598.LHK_00272"/>
<dbReference type="GeneID" id="75109488"/>
<dbReference type="KEGG" id="lhk:LHK_00272"/>
<dbReference type="eggNOG" id="COG0200">
    <property type="taxonomic scope" value="Bacteria"/>
</dbReference>
<dbReference type="HOGENOM" id="CLU_055188_4_2_4"/>
<dbReference type="Proteomes" id="UP000002010">
    <property type="component" value="Chromosome"/>
</dbReference>
<dbReference type="GO" id="GO:0022625">
    <property type="term" value="C:cytosolic large ribosomal subunit"/>
    <property type="evidence" value="ECO:0007669"/>
    <property type="project" value="TreeGrafter"/>
</dbReference>
<dbReference type="GO" id="GO:0019843">
    <property type="term" value="F:rRNA binding"/>
    <property type="evidence" value="ECO:0007669"/>
    <property type="project" value="UniProtKB-UniRule"/>
</dbReference>
<dbReference type="GO" id="GO:0003735">
    <property type="term" value="F:structural constituent of ribosome"/>
    <property type="evidence" value="ECO:0007669"/>
    <property type="project" value="InterPro"/>
</dbReference>
<dbReference type="GO" id="GO:0006412">
    <property type="term" value="P:translation"/>
    <property type="evidence" value="ECO:0007669"/>
    <property type="project" value="UniProtKB-UniRule"/>
</dbReference>
<dbReference type="Gene3D" id="3.100.10.10">
    <property type="match status" value="1"/>
</dbReference>
<dbReference type="HAMAP" id="MF_01341">
    <property type="entry name" value="Ribosomal_uL15"/>
    <property type="match status" value="1"/>
</dbReference>
<dbReference type="InterPro" id="IPR030878">
    <property type="entry name" value="Ribosomal_uL15"/>
</dbReference>
<dbReference type="InterPro" id="IPR021131">
    <property type="entry name" value="Ribosomal_uL15/eL18"/>
</dbReference>
<dbReference type="InterPro" id="IPR036227">
    <property type="entry name" value="Ribosomal_uL15/eL18_sf"/>
</dbReference>
<dbReference type="InterPro" id="IPR005749">
    <property type="entry name" value="Ribosomal_uL15_bac-type"/>
</dbReference>
<dbReference type="InterPro" id="IPR001196">
    <property type="entry name" value="Ribosomal_uL15_CS"/>
</dbReference>
<dbReference type="NCBIfam" id="TIGR01071">
    <property type="entry name" value="rplO_bact"/>
    <property type="match status" value="1"/>
</dbReference>
<dbReference type="PANTHER" id="PTHR12934">
    <property type="entry name" value="50S RIBOSOMAL PROTEIN L15"/>
    <property type="match status" value="1"/>
</dbReference>
<dbReference type="PANTHER" id="PTHR12934:SF11">
    <property type="entry name" value="LARGE RIBOSOMAL SUBUNIT PROTEIN UL15M"/>
    <property type="match status" value="1"/>
</dbReference>
<dbReference type="Pfam" id="PF00828">
    <property type="entry name" value="Ribosomal_L27A"/>
    <property type="match status" value="1"/>
</dbReference>
<dbReference type="SUPFAM" id="SSF52080">
    <property type="entry name" value="Ribosomal proteins L15p and L18e"/>
    <property type="match status" value="1"/>
</dbReference>
<dbReference type="PROSITE" id="PS00475">
    <property type="entry name" value="RIBOSOMAL_L15"/>
    <property type="match status" value="1"/>
</dbReference>
<protein>
    <recommendedName>
        <fullName evidence="1">Large ribosomal subunit protein uL15</fullName>
    </recommendedName>
    <alternativeName>
        <fullName evidence="3">50S ribosomal protein L15</fullName>
    </alternativeName>
</protein>
<gene>
    <name evidence="1" type="primary">rplO</name>
    <name type="ordered locus">LHK_00272</name>
</gene>
<organism>
    <name type="scientific">Laribacter hongkongensis (strain HLHK9)</name>
    <dbReference type="NCBI Taxonomy" id="557598"/>
    <lineage>
        <taxon>Bacteria</taxon>
        <taxon>Pseudomonadati</taxon>
        <taxon>Pseudomonadota</taxon>
        <taxon>Betaproteobacteria</taxon>
        <taxon>Neisseriales</taxon>
        <taxon>Aquaspirillaceae</taxon>
        <taxon>Laribacter</taxon>
    </lineage>
</organism>
<keyword id="KW-1185">Reference proteome</keyword>
<keyword id="KW-0687">Ribonucleoprotein</keyword>
<keyword id="KW-0689">Ribosomal protein</keyword>
<keyword id="KW-0694">RNA-binding</keyword>
<keyword id="KW-0699">rRNA-binding</keyword>
<sequence>MFLNTIKPGEGAKHAKRRVGRGIGSGLGKTAGRGHKGQKSRSGGFHKVGFEGGQMPLQRRLPKRGFKSLTRKLTAEVRLDDLARLPVDEIDFLALQQAGLVPAAARIAKVILAGKIERAVTLRGLLATAGAKAAIEAAGGQVNE</sequence>
<proteinExistence type="inferred from homology"/>
<reference key="1">
    <citation type="journal article" date="2009" name="PLoS Genet.">
        <title>The complete genome and proteome of Laribacter hongkongensis reveal potential mechanisms for adaptations to different temperatures and habitats.</title>
        <authorList>
            <person name="Woo P.C.Y."/>
            <person name="Lau S.K.P."/>
            <person name="Tse H."/>
            <person name="Teng J.L.L."/>
            <person name="Curreem S.O."/>
            <person name="Tsang A.K.L."/>
            <person name="Fan R.Y.Y."/>
            <person name="Wong G.K.M."/>
            <person name="Huang Y."/>
            <person name="Loman N.J."/>
            <person name="Snyder L.A.S."/>
            <person name="Cai J.J."/>
            <person name="Huang J.-D."/>
            <person name="Mak W."/>
            <person name="Pallen M.J."/>
            <person name="Lok S."/>
            <person name="Yuen K.-Y."/>
        </authorList>
    </citation>
    <scope>NUCLEOTIDE SEQUENCE [LARGE SCALE GENOMIC DNA]</scope>
    <source>
        <strain>HLHK9</strain>
    </source>
</reference>
<feature type="chain" id="PRO_1000166301" description="Large ribosomal subunit protein uL15">
    <location>
        <begin position="1"/>
        <end position="144"/>
    </location>
</feature>
<feature type="region of interest" description="Disordered" evidence="2">
    <location>
        <begin position="1"/>
        <end position="53"/>
    </location>
</feature>
<feature type="compositionally biased region" description="Gly residues" evidence="2">
    <location>
        <begin position="21"/>
        <end position="31"/>
    </location>
</feature>